<comment type="function">
    <text evidence="1">Catalyzes the excretion of spermidine.</text>
</comment>
<comment type="subunit">
    <text evidence="1">Forms a complex with MdtI.</text>
</comment>
<comment type="subcellular location">
    <subcellularLocation>
        <location evidence="1">Cell inner membrane</location>
        <topology evidence="1">Multi-pass membrane protein</topology>
    </subcellularLocation>
</comment>
<comment type="similarity">
    <text evidence="1">Belongs to the drug/metabolite transporter (DMT) superfamily. Small multidrug resistance (SMR) (TC 2.A.7.1) family. MdtJ subfamily.</text>
</comment>
<protein>
    <recommendedName>
        <fullName evidence="1">Spermidine export protein MdtJ</fullName>
    </recommendedName>
</protein>
<organism>
    <name type="scientific">Salmonella arizonae (strain ATCC BAA-731 / CDC346-86 / RSK2980)</name>
    <dbReference type="NCBI Taxonomy" id="41514"/>
    <lineage>
        <taxon>Bacteria</taxon>
        <taxon>Pseudomonadati</taxon>
        <taxon>Pseudomonadota</taxon>
        <taxon>Gammaproteobacteria</taxon>
        <taxon>Enterobacterales</taxon>
        <taxon>Enterobacteriaceae</taxon>
        <taxon>Salmonella</taxon>
    </lineage>
</organism>
<gene>
    <name evidence="1" type="primary">mdtJ</name>
    <name type="ordered locus">SARI_01496</name>
</gene>
<proteinExistence type="inferred from homology"/>
<keyword id="KW-0997">Cell inner membrane</keyword>
<keyword id="KW-1003">Cell membrane</keyword>
<keyword id="KW-0472">Membrane</keyword>
<keyword id="KW-1185">Reference proteome</keyword>
<keyword id="KW-0812">Transmembrane</keyword>
<keyword id="KW-1133">Transmembrane helix</keyword>
<keyword id="KW-0813">Transport</keyword>
<reference key="1">
    <citation type="submission" date="2007-11" db="EMBL/GenBank/DDBJ databases">
        <authorList>
            <consortium name="The Salmonella enterica serovar Arizonae Genome Sequencing Project"/>
            <person name="McClelland M."/>
            <person name="Sanderson E.K."/>
            <person name="Porwollik S."/>
            <person name="Spieth J."/>
            <person name="Clifton W.S."/>
            <person name="Fulton R."/>
            <person name="Chunyan W."/>
            <person name="Wollam A."/>
            <person name="Shah N."/>
            <person name="Pepin K."/>
            <person name="Bhonagiri V."/>
            <person name="Nash W."/>
            <person name="Johnson M."/>
            <person name="Thiruvilangam P."/>
            <person name="Wilson R."/>
        </authorList>
    </citation>
    <scope>NUCLEOTIDE SEQUENCE [LARGE SCALE GENOMIC DNA]</scope>
    <source>
        <strain>ATCC BAA-731 / CDC346-86 / RSK2980</strain>
    </source>
</reference>
<name>MDTJ_SALAR</name>
<evidence type="ECO:0000255" key="1">
    <source>
        <dbReference type="HAMAP-Rule" id="MF_01598"/>
    </source>
</evidence>
<sequence>MFYWILLALAIVAEITGTLSMKWASVGNGNAGYILMLVMITLSYIFLSFAVKKIALGVAYALWEGIGILFITVFSVLLFDEVLSTMKIVGLLTLIVGIVLIKSGTRKPGKPVKEATRATI</sequence>
<dbReference type="EMBL" id="CP000880">
    <property type="protein sequence ID" value="ABX21392.1"/>
    <property type="molecule type" value="Genomic_DNA"/>
</dbReference>
<dbReference type="SMR" id="A9MRT9"/>
<dbReference type="STRING" id="41514.SARI_01496"/>
<dbReference type="KEGG" id="ses:SARI_01496"/>
<dbReference type="HOGENOM" id="CLU_133067_0_0_6"/>
<dbReference type="Proteomes" id="UP000002084">
    <property type="component" value="Chromosome"/>
</dbReference>
<dbReference type="GO" id="GO:0005886">
    <property type="term" value="C:plasma membrane"/>
    <property type="evidence" value="ECO:0007669"/>
    <property type="project" value="UniProtKB-SubCell"/>
</dbReference>
<dbReference type="GO" id="GO:0015199">
    <property type="term" value="F:amino-acid betaine transmembrane transporter activity"/>
    <property type="evidence" value="ECO:0007669"/>
    <property type="project" value="TreeGrafter"/>
</dbReference>
<dbReference type="GO" id="GO:0015297">
    <property type="term" value="F:antiporter activity"/>
    <property type="evidence" value="ECO:0007669"/>
    <property type="project" value="TreeGrafter"/>
</dbReference>
<dbReference type="GO" id="GO:0015220">
    <property type="term" value="F:choline transmembrane transporter activity"/>
    <property type="evidence" value="ECO:0007669"/>
    <property type="project" value="TreeGrafter"/>
</dbReference>
<dbReference type="GO" id="GO:0015606">
    <property type="term" value="F:spermidine transmembrane transporter activity"/>
    <property type="evidence" value="ECO:0007669"/>
    <property type="project" value="UniProtKB-UniRule"/>
</dbReference>
<dbReference type="GO" id="GO:0031460">
    <property type="term" value="P:glycine betaine transport"/>
    <property type="evidence" value="ECO:0007669"/>
    <property type="project" value="TreeGrafter"/>
</dbReference>
<dbReference type="FunFam" id="1.10.3730.20:FF:000001">
    <property type="entry name" value="Quaternary ammonium compound resistance transporter SugE"/>
    <property type="match status" value="1"/>
</dbReference>
<dbReference type="Gene3D" id="1.10.3730.20">
    <property type="match status" value="1"/>
</dbReference>
<dbReference type="HAMAP" id="MF_01598">
    <property type="entry name" value="MdtJ"/>
    <property type="match status" value="1"/>
</dbReference>
<dbReference type="InterPro" id="IPR000390">
    <property type="entry name" value="Small_drug/metabolite_transptr"/>
</dbReference>
<dbReference type="InterPro" id="IPR045324">
    <property type="entry name" value="Small_multidrug_res"/>
</dbReference>
<dbReference type="InterPro" id="IPR023740">
    <property type="entry name" value="Spermidine_export_MdtJ"/>
</dbReference>
<dbReference type="NCBIfam" id="NF007767">
    <property type="entry name" value="PRK10452.1"/>
    <property type="match status" value="1"/>
</dbReference>
<dbReference type="PANTHER" id="PTHR30561">
    <property type="entry name" value="SMR FAMILY PROTON-DEPENDENT DRUG EFFLUX TRANSPORTER SUGE"/>
    <property type="match status" value="1"/>
</dbReference>
<dbReference type="PANTHER" id="PTHR30561:SF2">
    <property type="entry name" value="SPERMIDINE EXPORT PROTEIN MDTJ"/>
    <property type="match status" value="1"/>
</dbReference>
<dbReference type="Pfam" id="PF00893">
    <property type="entry name" value="Multi_Drug_Res"/>
    <property type="match status" value="1"/>
</dbReference>
<dbReference type="SUPFAM" id="SSF103481">
    <property type="entry name" value="Multidrug resistance efflux transporter EmrE"/>
    <property type="match status" value="1"/>
</dbReference>
<feature type="chain" id="PRO_0000331173" description="Spermidine export protein MdtJ">
    <location>
        <begin position="1"/>
        <end position="120"/>
    </location>
</feature>
<feature type="transmembrane region" description="Helical" evidence="1">
    <location>
        <begin position="1"/>
        <end position="21"/>
    </location>
</feature>
<feature type="transmembrane region" description="Helical" evidence="1">
    <location>
        <begin position="31"/>
        <end position="51"/>
    </location>
</feature>
<feature type="transmembrane region" description="Helical" evidence="1">
    <location>
        <begin position="54"/>
        <end position="74"/>
    </location>
</feature>
<feature type="transmembrane region" description="Helical" evidence="1">
    <location>
        <begin position="81"/>
        <end position="101"/>
    </location>
</feature>
<accession>A9MRT9</accession>